<accession>C1ANM8</accession>
<protein>
    <recommendedName>
        <fullName evidence="1">Phosphoribosyl-AMP cyclohydrolase</fullName>
        <shortName evidence="1">PRA-CH</shortName>
        <ecNumber evidence="1">3.5.4.19</ecNumber>
    </recommendedName>
</protein>
<keyword id="KW-0028">Amino-acid biosynthesis</keyword>
<keyword id="KW-0963">Cytoplasm</keyword>
<keyword id="KW-0368">Histidine biosynthesis</keyword>
<keyword id="KW-0378">Hydrolase</keyword>
<keyword id="KW-0460">Magnesium</keyword>
<keyword id="KW-0479">Metal-binding</keyword>
<keyword id="KW-0862">Zinc</keyword>
<evidence type="ECO:0000255" key="1">
    <source>
        <dbReference type="HAMAP-Rule" id="MF_01021"/>
    </source>
</evidence>
<sequence>MTLDPKIAARLKRNADGLVTAVVQERGSGDVLMVAWMNDEALARTLQTREATYYSRSRAEQWVKGATSGHTQHVHSVRLDCDGDAVLLTVDQVGGACHTGDHSCFDAAVLLEPDD</sequence>
<gene>
    <name evidence="1" type="primary">hisI</name>
    <name type="ordered locus">JTY_1619</name>
</gene>
<dbReference type="EC" id="3.5.4.19" evidence="1"/>
<dbReference type="EMBL" id="AP010918">
    <property type="protein sequence ID" value="BAH25907.1"/>
    <property type="molecule type" value="Genomic_DNA"/>
</dbReference>
<dbReference type="RefSeq" id="WP_003407963.1">
    <property type="nucleotide sequence ID" value="NZ_CP014566.1"/>
</dbReference>
<dbReference type="SMR" id="C1ANM8"/>
<dbReference type="GeneID" id="45425574"/>
<dbReference type="KEGG" id="mbt:JTY_1619"/>
<dbReference type="HOGENOM" id="CLU_048577_5_1_11"/>
<dbReference type="UniPathway" id="UPA00031">
    <property type="reaction ID" value="UER00008"/>
</dbReference>
<dbReference type="GO" id="GO:0005737">
    <property type="term" value="C:cytoplasm"/>
    <property type="evidence" value="ECO:0007669"/>
    <property type="project" value="UniProtKB-SubCell"/>
</dbReference>
<dbReference type="GO" id="GO:0000287">
    <property type="term" value="F:magnesium ion binding"/>
    <property type="evidence" value="ECO:0007669"/>
    <property type="project" value="UniProtKB-UniRule"/>
</dbReference>
<dbReference type="GO" id="GO:0004635">
    <property type="term" value="F:phosphoribosyl-AMP cyclohydrolase activity"/>
    <property type="evidence" value="ECO:0007669"/>
    <property type="project" value="UniProtKB-UniRule"/>
</dbReference>
<dbReference type="GO" id="GO:0008270">
    <property type="term" value="F:zinc ion binding"/>
    <property type="evidence" value="ECO:0007669"/>
    <property type="project" value="UniProtKB-UniRule"/>
</dbReference>
<dbReference type="GO" id="GO:0000105">
    <property type="term" value="P:L-histidine biosynthetic process"/>
    <property type="evidence" value="ECO:0007669"/>
    <property type="project" value="UniProtKB-UniRule"/>
</dbReference>
<dbReference type="FunFam" id="3.10.20.810:FF:000001">
    <property type="entry name" value="Histidine biosynthesis bifunctional protein HisIE"/>
    <property type="match status" value="1"/>
</dbReference>
<dbReference type="Gene3D" id="3.10.20.810">
    <property type="entry name" value="Phosphoribosyl-AMP cyclohydrolase"/>
    <property type="match status" value="1"/>
</dbReference>
<dbReference type="HAMAP" id="MF_01021">
    <property type="entry name" value="HisI"/>
    <property type="match status" value="1"/>
</dbReference>
<dbReference type="InterPro" id="IPR026660">
    <property type="entry name" value="PRA-CH"/>
</dbReference>
<dbReference type="InterPro" id="IPR002496">
    <property type="entry name" value="PRib_AMP_CycHydrolase_dom"/>
</dbReference>
<dbReference type="InterPro" id="IPR038019">
    <property type="entry name" value="PRib_AMP_CycHydrolase_sf"/>
</dbReference>
<dbReference type="NCBIfam" id="NF000768">
    <property type="entry name" value="PRK00051.1"/>
    <property type="match status" value="1"/>
</dbReference>
<dbReference type="PANTHER" id="PTHR42945">
    <property type="entry name" value="HISTIDINE BIOSYNTHESIS BIFUNCTIONAL PROTEIN"/>
    <property type="match status" value="1"/>
</dbReference>
<dbReference type="PANTHER" id="PTHR42945:SF11">
    <property type="entry name" value="PHOSPHORIBOSYL-AMP CYCLOHYDROLASE"/>
    <property type="match status" value="1"/>
</dbReference>
<dbReference type="Pfam" id="PF01502">
    <property type="entry name" value="PRA-CH"/>
    <property type="match status" value="1"/>
</dbReference>
<dbReference type="SUPFAM" id="SSF141734">
    <property type="entry name" value="HisI-like"/>
    <property type="match status" value="1"/>
</dbReference>
<feature type="chain" id="PRO_1000149074" description="Phosphoribosyl-AMP cyclohydrolase">
    <location>
        <begin position="1"/>
        <end position="115"/>
    </location>
</feature>
<feature type="binding site" evidence="1">
    <location>
        <position position="80"/>
    </location>
    <ligand>
        <name>Mg(2+)</name>
        <dbReference type="ChEBI" id="CHEBI:18420"/>
    </ligand>
</feature>
<feature type="binding site" evidence="1">
    <location>
        <position position="81"/>
    </location>
    <ligand>
        <name>Zn(2+)</name>
        <dbReference type="ChEBI" id="CHEBI:29105"/>
        <note>ligand shared between dimeric partners</note>
    </ligand>
</feature>
<feature type="binding site" evidence="1">
    <location>
        <position position="82"/>
    </location>
    <ligand>
        <name>Mg(2+)</name>
        <dbReference type="ChEBI" id="CHEBI:18420"/>
    </ligand>
</feature>
<feature type="binding site" evidence="1">
    <location>
        <position position="84"/>
    </location>
    <ligand>
        <name>Mg(2+)</name>
        <dbReference type="ChEBI" id="CHEBI:18420"/>
    </ligand>
</feature>
<feature type="binding site" evidence="1">
    <location>
        <position position="97"/>
    </location>
    <ligand>
        <name>Zn(2+)</name>
        <dbReference type="ChEBI" id="CHEBI:29105"/>
        <note>ligand shared between dimeric partners</note>
    </ligand>
</feature>
<feature type="binding site" evidence="1">
    <location>
        <position position="104"/>
    </location>
    <ligand>
        <name>Zn(2+)</name>
        <dbReference type="ChEBI" id="CHEBI:29105"/>
        <note>ligand shared between dimeric partners</note>
    </ligand>
</feature>
<proteinExistence type="inferred from homology"/>
<comment type="function">
    <text evidence="1">Catalyzes the hydrolysis of the adenine ring of phosphoribosyl-AMP.</text>
</comment>
<comment type="catalytic activity">
    <reaction evidence="1">
        <text>1-(5-phospho-beta-D-ribosyl)-5'-AMP + H2O = 1-(5-phospho-beta-D-ribosyl)-5-[(5-phospho-beta-D-ribosylamino)methylideneamino]imidazole-4-carboxamide</text>
        <dbReference type="Rhea" id="RHEA:20049"/>
        <dbReference type="ChEBI" id="CHEBI:15377"/>
        <dbReference type="ChEBI" id="CHEBI:58435"/>
        <dbReference type="ChEBI" id="CHEBI:59457"/>
        <dbReference type="EC" id="3.5.4.19"/>
    </reaction>
</comment>
<comment type="cofactor">
    <cofactor evidence="1">
        <name>Mg(2+)</name>
        <dbReference type="ChEBI" id="CHEBI:18420"/>
    </cofactor>
    <text evidence="1">Binds 1 Mg(2+) ion per subunit.</text>
</comment>
<comment type="cofactor">
    <cofactor evidence="1">
        <name>Zn(2+)</name>
        <dbReference type="ChEBI" id="CHEBI:29105"/>
    </cofactor>
    <text evidence="1">Binds 1 zinc ion per subunit.</text>
</comment>
<comment type="pathway">
    <text evidence="1">Amino-acid biosynthesis; L-histidine biosynthesis; L-histidine from 5-phospho-alpha-D-ribose 1-diphosphate: step 3/9.</text>
</comment>
<comment type="subunit">
    <text evidence="1">Homodimer.</text>
</comment>
<comment type="subcellular location">
    <subcellularLocation>
        <location evidence="1">Cytoplasm</location>
    </subcellularLocation>
</comment>
<comment type="similarity">
    <text evidence="1">Belongs to the PRA-CH family.</text>
</comment>
<organism>
    <name type="scientific">Mycobacterium bovis (strain BCG / Tokyo 172 / ATCC 35737 / TMC 1019)</name>
    <dbReference type="NCBI Taxonomy" id="561275"/>
    <lineage>
        <taxon>Bacteria</taxon>
        <taxon>Bacillati</taxon>
        <taxon>Actinomycetota</taxon>
        <taxon>Actinomycetes</taxon>
        <taxon>Mycobacteriales</taxon>
        <taxon>Mycobacteriaceae</taxon>
        <taxon>Mycobacterium</taxon>
        <taxon>Mycobacterium tuberculosis complex</taxon>
    </lineage>
</organism>
<name>HIS3_MYCBT</name>
<reference key="1">
    <citation type="journal article" date="2009" name="Vaccine">
        <title>Whole genome sequence analysis of Mycobacterium bovis bacillus Calmette-Guerin (BCG) Tokyo 172: a comparative study of BCG vaccine substrains.</title>
        <authorList>
            <person name="Seki M."/>
            <person name="Honda I."/>
            <person name="Fujita I."/>
            <person name="Yano I."/>
            <person name="Yamamoto S."/>
            <person name="Koyama A."/>
        </authorList>
    </citation>
    <scope>NUCLEOTIDE SEQUENCE [LARGE SCALE GENOMIC DNA]</scope>
    <source>
        <strain>BCG / Tokyo 172 / ATCC 35737 / TMC 1019</strain>
    </source>
</reference>